<proteinExistence type="inferred from homology"/>
<name>MVP1_ASPOR</name>
<keyword id="KW-0963">Cytoplasm</keyword>
<keyword id="KW-0472">Membrane</keyword>
<keyword id="KW-0653">Protein transport</keyword>
<keyword id="KW-1185">Reference proteome</keyword>
<keyword id="KW-0813">Transport</keyword>
<reference key="1">
    <citation type="journal article" date="2005" name="Nature">
        <title>Genome sequencing and analysis of Aspergillus oryzae.</title>
        <authorList>
            <person name="Machida M."/>
            <person name="Asai K."/>
            <person name="Sano M."/>
            <person name="Tanaka T."/>
            <person name="Kumagai T."/>
            <person name="Terai G."/>
            <person name="Kusumoto K."/>
            <person name="Arima T."/>
            <person name="Akita O."/>
            <person name="Kashiwagi Y."/>
            <person name="Abe K."/>
            <person name="Gomi K."/>
            <person name="Horiuchi H."/>
            <person name="Kitamoto K."/>
            <person name="Kobayashi T."/>
            <person name="Takeuchi M."/>
            <person name="Denning D.W."/>
            <person name="Galagan J.E."/>
            <person name="Nierman W.C."/>
            <person name="Yu J."/>
            <person name="Archer D.B."/>
            <person name="Bennett J.W."/>
            <person name="Bhatnagar D."/>
            <person name="Cleveland T.E."/>
            <person name="Fedorova N.D."/>
            <person name="Gotoh O."/>
            <person name="Horikawa H."/>
            <person name="Hosoyama A."/>
            <person name="Ichinomiya M."/>
            <person name="Igarashi R."/>
            <person name="Iwashita K."/>
            <person name="Juvvadi P.R."/>
            <person name="Kato M."/>
            <person name="Kato Y."/>
            <person name="Kin T."/>
            <person name="Kokubun A."/>
            <person name="Maeda H."/>
            <person name="Maeyama N."/>
            <person name="Maruyama J."/>
            <person name="Nagasaki H."/>
            <person name="Nakajima T."/>
            <person name="Oda K."/>
            <person name="Okada K."/>
            <person name="Paulsen I."/>
            <person name="Sakamoto K."/>
            <person name="Sawano T."/>
            <person name="Takahashi M."/>
            <person name="Takase K."/>
            <person name="Terabayashi Y."/>
            <person name="Wortman J.R."/>
            <person name="Yamada O."/>
            <person name="Yamagata Y."/>
            <person name="Anazawa H."/>
            <person name="Hata Y."/>
            <person name="Koide Y."/>
            <person name="Komori T."/>
            <person name="Koyama Y."/>
            <person name="Minetoki T."/>
            <person name="Suharnan S."/>
            <person name="Tanaka A."/>
            <person name="Isono K."/>
            <person name="Kuhara S."/>
            <person name="Ogasawara N."/>
            <person name="Kikuchi H."/>
        </authorList>
    </citation>
    <scope>NUCLEOTIDE SEQUENCE [LARGE SCALE GENOMIC DNA]</scope>
    <source>
        <strain>ATCC 42149 / RIB 40</strain>
    </source>
</reference>
<sequence>MSLFGTSPEDSSAGNSAHRSKSSLFADEPSLGTGSNANLGSSSLFADDDDLSSGSPWNSNVNKRTARHKLVKTLLSDSDAPESYIDAYDLVLSAGDRVGAGIGLTSVREILSGSGISASDQEKILNIVVSGDIDSANGLGRGEFNVLLALVGLAQEGEDLTLDAVDDRRKKLPAPKSLYLDALRANQESGTPAPSQERPITPPRPASPQQAPNSAHSRRESMTGLESDPWGSPELHRGHAHAQLESDHPVLNGYGSVRSATNAWSSRVGEDNNPNEISNSNRANSQTDSAPSHGSGFGWGESLGNTPSDGGLGGTARAGLGGFGPPSSVHSDSNPRRRSLGIGRVASPPVEEHVTVTLLPEKEGMFMFQHRNYEVKSARRGSTVVRRYSDFVWLLDCLQKRYPFRQLPLLPPKRLSADSNAFLEKRRRGLVRFTNALVRHPVLSQEQLVIMFLTVPTELSVWRKQATISVQDEFTGRDLPPDLEDSLPSTLPDTFETVRGGVKRSAEIYINLCTLLERLAKRNEGLAADHLRFSLALQSLTEVTRDTYAIDTNDVPLLNEGIRATANHLSVSQSLLEDEARAWEEGVLEDLKRQRDCLVSVREMFDRRDRYARNNIPQLERRIENNERKLQDLRSRPQGTVKPGEIEKVEDAIIKDKESIVQQHARGVFIKECIRDEIVYFQQSQYHISRLHQEWSQERVKYAELQADNWRSLSDQVESMPLSG</sequence>
<feature type="chain" id="PRO_0000238595" description="Sorting nexin mvp1">
    <location>
        <begin position="1"/>
        <end position="724"/>
    </location>
</feature>
<feature type="domain" description="PX" evidence="2">
    <location>
        <begin position="351"/>
        <end position="459"/>
    </location>
</feature>
<feature type="region of interest" description="Disordered" evidence="3">
    <location>
        <begin position="1"/>
        <end position="39"/>
    </location>
</feature>
<feature type="region of interest" description="Disordered" evidence="3">
    <location>
        <begin position="176"/>
        <end position="242"/>
    </location>
</feature>
<feature type="region of interest" description="Disordered" evidence="3">
    <location>
        <begin position="265"/>
        <end position="342"/>
    </location>
</feature>
<feature type="compositionally biased region" description="Polar residues" evidence="3">
    <location>
        <begin position="1"/>
        <end position="17"/>
    </location>
</feature>
<feature type="compositionally biased region" description="Polar residues" evidence="3">
    <location>
        <begin position="272"/>
        <end position="292"/>
    </location>
</feature>
<feature type="compositionally biased region" description="Gly residues" evidence="3">
    <location>
        <begin position="310"/>
        <end position="324"/>
    </location>
</feature>
<feature type="binding site" evidence="1">
    <location>
        <position position="387"/>
    </location>
    <ligand>
        <name>a 1,2-diacyl-sn-glycero-3-phospho-(1D-myo-inositol-3-phosphate)</name>
        <dbReference type="ChEBI" id="CHEBI:58088"/>
    </ligand>
</feature>
<feature type="binding site" evidence="1">
    <location>
        <position position="389"/>
    </location>
    <ligand>
        <name>a 1,2-diacyl-sn-glycero-3-phospho-(1D-myo-inositol-3-phosphate)</name>
        <dbReference type="ChEBI" id="CHEBI:58088"/>
    </ligand>
</feature>
<feature type="binding site" evidence="1">
    <location>
        <position position="413"/>
    </location>
    <ligand>
        <name>a 1,2-diacyl-sn-glycero-3-phospho-(1D-myo-inositol-3-phosphate)</name>
        <dbReference type="ChEBI" id="CHEBI:58088"/>
    </ligand>
</feature>
<feature type="binding site" evidence="1">
    <location>
        <position position="426"/>
    </location>
    <ligand>
        <name>a 1,2-diacyl-sn-glycero-3-phospho-(1D-myo-inositol-3-phosphate)</name>
        <dbReference type="ChEBI" id="CHEBI:58088"/>
    </ligand>
</feature>
<organism>
    <name type="scientific">Aspergillus oryzae (strain ATCC 42149 / RIB 40)</name>
    <name type="common">Yellow koji mold</name>
    <dbReference type="NCBI Taxonomy" id="510516"/>
    <lineage>
        <taxon>Eukaryota</taxon>
        <taxon>Fungi</taxon>
        <taxon>Dikarya</taxon>
        <taxon>Ascomycota</taxon>
        <taxon>Pezizomycotina</taxon>
        <taxon>Eurotiomycetes</taxon>
        <taxon>Eurotiomycetidae</taxon>
        <taxon>Eurotiales</taxon>
        <taxon>Aspergillaceae</taxon>
        <taxon>Aspergillus</taxon>
        <taxon>Aspergillus subgen. Circumdati</taxon>
    </lineage>
</organism>
<dbReference type="EMBL" id="BA000052">
    <property type="protein sequence ID" value="BAE61209.1"/>
    <property type="molecule type" value="Genomic_DNA"/>
</dbReference>
<dbReference type="RefSeq" id="XP_001822342.1">
    <property type="nucleotide sequence ID" value="XM_001822290.2"/>
</dbReference>
<dbReference type="SMR" id="Q2UB56"/>
<dbReference type="STRING" id="510516.Q2UB56"/>
<dbReference type="EnsemblFungi" id="BAE61209">
    <property type="protein sequence ID" value="BAE61209"/>
    <property type="gene ID" value="AO090102000101"/>
</dbReference>
<dbReference type="GeneID" id="5994387"/>
<dbReference type="KEGG" id="aor:AO090102000101"/>
<dbReference type="HOGENOM" id="CLU_009058_1_0_1"/>
<dbReference type="OMA" id="SSPWDMP"/>
<dbReference type="OrthoDB" id="103357at5052"/>
<dbReference type="Proteomes" id="UP000006564">
    <property type="component" value="Chromosome 4"/>
</dbReference>
<dbReference type="GO" id="GO:0005829">
    <property type="term" value="C:cytosol"/>
    <property type="evidence" value="ECO:0007669"/>
    <property type="project" value="GOC"/>
</dbReference>
<dbReference type="GO" id="GO:0005768">
    <property type="term" value="C:endosome"/>
    <property type="evidence" value="ECO:0007669"/>
    <property type="project" value="TreeGrafter"/>
</dbReference>
<dbReference type="GO" id="GO:0016020">
    <property type="term" value="C:membrane"/>
    <property type="evidence" value="ECO:0007669"/>
    <property type="project" value="UniProtKB-SubCell"/>
</dbReference>
<dbReference type="GO" id="GO:0032266">
    <property type="term" value="F:phosphatidylinositol-3-phosphate binding"/>
    <property type="evidence" value="ECO:0007669"/>
    <property type="project" value="TreeGrafter"/>
</dbReference>
<dbReference type="GO" id="GO:0006623">
    <property type="term" value="P:protein targeting to vacuole"/>
    <property type="evidence" value="ECO:0007669"/>
    <property type="project" value="TreeGrafter"/>
</dbReference>
<dbReference type="GO" id="GO:0042147">
    <property type="term" value="P:retrograde transport, endosome to Golgi"/>
    <property type="evidence" value="ECO:0007669"/>
    <property type="project" value="InterPro"/>
</dbReference>
<dbReference type="CDD" id="cd07597">
    <property type="entry name" value="BAR_SNX8"/>
    <property type="match status" value="1"/>
</dbReference>
<dbReference type="CDD" id="cd06866">
    <property type="entry name" value="PX_SNX8_Mvp1p_like"/>
    <property type="match status" value="1"/>
</dbReference>
<dbReference type="FunFam" id="3.30.1520.10:FF:000037">
    <property type="entry name" value="Sorting nexin mvp-1"/>
    <property type="match status" value="1"/>
</dbReference>
<dbReference type="FunFam" id="1.20.1270.60:FF:000072">
    <property type="entry name" value="Sorting nexin MVP1"/>
    <property type="match status" value="1"/>
</dbReference>
<dbReference type="FunFam" id="1.10.238.10:FF:000466">
    <property type="entry name" value="Sorting nexin Mvp1"/>
    <property type="match status" value="1"/>
</dbReference>
<dbReference type="Gene3D" id="1.20.1270.60">
    <property type="entry name" value="Arfaptin homology (AH) domain/BAR domain"/>
    <property type="match status" value="1"/>
</dbReference>
<dbReference type="Gene3D" id="1.10.238.10">
    <property type="entry name" value="EF-hand"/>
    <property type="match status" value="1"/>
</dbReference>
<dbReference type="Gene3D" id="3.30.1520.10">
    <property type="entry name" value="Phox-like domain"/>
    <property type="match status" value="1"/>
</dbReference>
<dbReference type="InterPro" id="IPR027267">
    <property type="entry name" value="AH/BAR_dom_sf"/>
</dbReference>
<dbReference type="InterPro" id="IPR001683">
    <property type="entry name" value="PX_dom"/>
</dbReference>
<dbReference type="InterPro" id="IPR036871">
    <property type="entry name" value="PX_dom_sf"/>
</dbReference>
<dbReference type="InterPro" id="IPR028662">
    <property type="entry name" value="SNX8/Mvp1"/>
</dbReference>
<dbReference type="InterPro" id="IPR035704">
    <property type="entry name" value="SNX8/Mvp1_PX"/>
</dbReference>
<dbReference type="InterPro" id="IPR045734">
    <property type="entry name" value="Snx8_BAR_dom"/>
</dbReference>
<dbReference type="PANTHER" id="PTHR47554">
    <property type="entry name" value="SORTING NEXIN MVP1"/>
    <property type="match status" value="1"/>
</dbReference>
<dbReference type="PANTHER" id="PTHR47554:SF1">
    <property type="entry name" value="SORTING NEXIN MVP1"/>
    <property type="match status" value="1"/>
</dbReference>
<dbReference type="Pfam" id="PF00787">
    <property type="entry name" value="PX"/>
    <property type="match status" value="1"/>
</dbReference>
<dbReference type="Pfam" id="PF19566">
    <property type="entry name" value="Snx8_BAR_dom"/>
    <property type="match status" value="1"/>
</dbReference>
<dbReference type="SMART" id="SM00312">
    <property type="entry name" value="PX"/>
    <property type="match status" value="1"/>
</dbReference>
<dbReference type="SUPFAM" id="SSF64268">
    <property type="entry name" value="PX domain"/>
    <property type="match status" value="1"/>
</dbReference>
<dbReference type="PROSITE" id="PS50195">
    <property type="entry name" value="PX"/>
    <property type="match status" value="1"/>
</dbReference>
<protein>
    <recommendedName>
        <fullName>Sorting nexin mvp1</fullName>
    </recommendedName>
</protein>
<accession>Q2UB56</accession>
<gene>
    <name type="primary">mvp1</name>
    <name type="ORF">AO090102000101</name>
</gene>
<comment type="function">
    <text evidence="1">Required for vacuolar protein sorting.</text>
</comment>
<comment type="subcellular location">
    <subcellularLocation>
        <location evidence="1">Cytoplasm</location>
    </subcellularLocation>
    <subcellularLocation>
        <location evidence="1">Membrane</location>
        <topology evidence="1">Peripheral membrane protein</topology>
        <orientation evidence="1">Cytoplasmic side</orientation>
    </subcellularLocation>
</comment>
<comment type="domain">
    <text evidence="1">The PX domain binds phosphatidylinositol 3-phosphate which is necessary for peripheral membrane localization.</text>
</comment>
<comment type="similarity">
    <text evidence="4">Belongs to the sorting nexin family.</text>
</comment>
<evidence type="ECO:0000250" key="1"/>
<evidence type="ECO:0000255" key="2">
    <source>
        <dbReference type="PROSITE-ProRule" id="PRU00147"/>
    </source>
</evidence>
<evidence type="ECO:0000256" key="3">
    <source>
        <dbReference type="SAM" id="MobiDB-lite"/>
    </source>
</evidence>
<evidence type="ECO:0000305" key="4"/>